<dbReference type="EC" id="3.1.1.4"/>
<dbReference type="PIR" id="B32416">
    <property type="entry name" value="B32416"/>
</dbReference>
<dbReference type="SMR" id="P20259"/>
<dbReference type="GO" id="GO:0005576">
    <property type="term" value="C:extracellular region"/>
    <property type="evidence" value="ECO:0007669"/>
    <property type="project" value="UniProtKB-SubCell"/>
</dbReference>
<dbReference type="GO" id="GO:0005509">
    <property type="term" value="F:calcium ion binding"/>
    <property type="evidence" value="ECO:0007669"/>
    <property type="project" value="InterPro"/>
</dbReference>
<dbReference type="GO" id="GO:0047498">
    <property type="term" value="F:calcium-dependent phospholipase A2 activity"/>
    <property type="evidence" value="ECO:0007669"/>
    <property type="project" value="TreeGrafter"/>
</dbReference>
<dbReference type="GO" id="GO:0005543">
    <property type="term" value="F:phospholipid binding"/>
    <property type="evidence" value="ECO:0007669"/>
    <property type="project" value="TreeGrafter"/>
</dbReference>
<dbReference type="GO" id="GO:0090729">
    <property type="term" value="F:toxin activity"/>
    <property type="evidence" value="ECO:0007669"/>
    <property type="project" value="UniProtKB-KW"/>
</dbReference>
<dbReference type="GO" id="GO:0050482">
    <property type="term" value="P:arachidonate secretion"/>
    <property type="evidence" value="ECO:0007669"/>
    <property type="project" value="InterPro"/>
</dbReference>
<dbReference type="GO" id="GO:0016042">
    <property type="term" value="P:lipid catabolic process"/>
    <property type="evidence" value="ECO:0007669"/>
    <property type="project" value="UniProtKB-KW"/>
</dbReference>
<dbReference type="GO" id="GO:0006644">
    <property type="term" value="P:phospholipid metabolic process"/>
    <property type="evidence" value="ECO:0007669"/>
    <property type="project" value="InterPro"/>
</dbReference>
<dbReference type="CDD" id="cd00125">
    <property type="entry name" value="PLA2c"/>
    <property type="match status" value="1"/>
</dbReference>
<dbReference type="FunFam" id="1.20.90.10:FF:000007">
    <property type="entry name" value="Acidic phospholipase A2"/>
    <property type="match status" value="1"/>
</dbReference>
<dbReference type="Gene3D" id="1.20.90.10">
    <property type="entry name" value="Phospholipase A2 domain"/>
    <property type="match status" value="1"/>
</dbReference>
<dbReference type="InterPro" id="IPR001211">
    <property type="entry name" value="PLipase_A2"/>
</dbReference>
<dbReference type="InterPro" id="IPR033112">
    <property type="entry name" value="PLipase_A2_Asp_AS"/>
</dbReference>
<dbReference type="InterPro" id="IPR016090">
    <property type="entry name" value="PLipase_A2_dom"/>
</dbReference>
<dbReference type="InterPro" id="IPR036444">
    <property type="entry name" value="PLipase_A2_dom_sf"/>
</dbReference>
<dbReference type="InterPro" id="IPR033113">
    <property type="entry name" value="PLipase_A2_His_AS"/>
</dbReference>
<dbReference type="PANTHER" id="PTHR11716:SF94">
    <property type="entry name" value="PHOSPHOLIPASE A2"/>
    <property type="match status" value="1"/>
</dbReference>
<dbReference type="PANTHER" id="PTHR11716">
    <property type="entry name" value="PHOSPHOLIPASE A2 FAMILY MEMBER"/>
    <property type="match status" value="1"/>
</dbReference>
<dbReference type="Pfam" id="PF00068">
    <property type="entry name" value="Phospholip_A2_1"/>
    <property type="match status" value="1"/>
</dbReference>
<dbReference type="PRINTS" id="PR00389">
    <property type="entry name" value="PHPHLIPASEA2"/>
</dbReference>
<dbReference type="SMART" id="SM00085">
    <property type="entry name" value="PA2c"/>
    <property type="match status" value="1"/>
</dbReference>
<dbReference type="SUPFAM" id="SSF48619">
    <property type="entry name" value="Phospholipase A2, PLA2"/>
    <property type="match status" value="1"/>
</dbReference>
<dbReference type="PROSITE" id="PS00119">
    <property type="entry name" value="PA2_ASP"/>
    <property type="match status" value="1"/>
</dbReference>
<dbReference type="PROSITE" id="PS00118">
    <property type="entry name" value="PA2_HIS"/>
    <property type="match status" value="1"/>
</dbReference>
<proteinExistence type="evidence at protein level"/>
<keyword id="KW-0106">Calcium</keyword>
<keyword id="KW-0903">Direct protein sequencing</keyword>
<keyword id="KW-1015">Disulfide bond</keyword>
<keyword id="KW-0378">Hydrolase</keyword>
<keyword id="KW-0442">Lipid degradation</keyword>
<keyword id="KW-0443">Lipid metabolism</keyword>
<keyword id="KW-0479">Metal-binding</keyword>
<keyword id="KW-0964">Secreted</keyword>
<keyword id="KW-0800">Toxin</keyword>
<protein>
    <recommendedName>
        <fullName>Basic phospholipase A2 pseudexin B chain</fullName>
        <shortName>svPLA2</shortName>
        <ecNumber>3.1.1.4</ecNumber>
    </recommendedName>
    <alternativeName>
        <fullName>Phosphatidylcholine 2-acylhydrolase</fullName>
    </alternativeName>
</protein>
<name>PA2BB_PSEPO</name>
<feature type="chain" id="PRO_0000161692" description="Basic phospholipase A2 pseudexin B chain">
    <location>
        <begin position="1"/>
        <end position="117"/>
    </location>
</feature>
<feature type="active site" evidence="1">
    <location>
        <position position="48"/>
    </location>
</feature>
<feature type="active site" evidence="1">
    <location>
        <position position="92"/>
    </location>
</feature>
<feature type="binding site" evidence="1">
    <location>
        <position position="28"/>
    </location>
    <ligand>
        <name>Ca(2+)</name>
        <dbReference type="ChEBI" id="CHEBI:29108"/>
    </ligand>
</feature>
<feature type="binding site" evidence="1">
    <location>
        <position position="30"/>
    </location>
    <ligand>
        <name>Ca(2+)</name>
        <dbReference type="ChEBI" id="CHEBI:29108"/>
    </ligand>
</feature>
<feature type="binding site" evidence="1">
    <location>
        <position position="32"/>
    </location>
    <ligand>
        <name>Ca(2+)</name>
        <dbReference type="ChEBI" id="CHEBI:29108"/>
    </ligand>
</feature>
<feature type="binding site" evidence="1">
    <location>
        <position position="49"/>
    </location>
    <ligand>
        <name>Ca(2+)</name>
        <dbReference type="ChEBI" id="CHEBI:29108"/>
    </ligand>
</feature>
<feature type="disulfide bond" evidence="1">
    <location>
        <begin position="11"/>
        <end position="71"/>
    </location>
</feature>
<feature type="disulfide bond" evidence="1">
    <location>
        <begin position="27"/>
        <end position="117"/>
    </location>
</feature>
<feature type="disulfide bond" evidence="1">
    <location>
        <begin position="29"/>
        <end position="45"/>
    </location>
</feature>
<feature type="disulfide bond" evidence="1">
    <location>
        <begin position="44"/>
        <end position="98"/>
    </location>
</feature>
<feature type="disulfide bond" evidence="1">
    <location>
        <begin position="51"/>
        <end position="91"/>
    </location>
</feature>
<feature type="disulfide bond" evidence="1">
    <location>
        <begin position="60"/>
        <end position="84"/>
    </location>
</feature>
<feature type="disulfide bond" evidence="1">
    <location>
        <begin position="78"/>
        <end position="89"/>
    </location>
</feature>
<sequence>NLIQFSNMIKCAIPGSRPLFQYADYGCYCGPGGHGTPVDELDRCCKIHDDCYGEAGKKGCFPKLTLYSWKCTEKVPTCNAKSRCKDFVCACDAEAAKCFAKAPYIKENYNINTKTRC</sequence>
<accession>P20259</accession>
<evidence type="ECO:0000250" key="1"/>
<evidence type="ECO:0000255" key="2">
    <source>
        <dbReference type="PROSITE-ProRule" id="PRU10035"/>
    </source>
</evidence>
<evidence type="ECO:0000255" key="3">
    <source>
        <dbReference type="PROSITE-ProRule" id="PRU10036"/>
    </source>
</evidence>
<evidence type="ECO:0000269" key="4">
    <source>
    </source>
</evidence>
<evidence type="ECO:0000305" key="5"/>
<reference key="1">
    <citation type="journal article" date="1989" name="Toxicon">
        <title>Purification, sequencing and characterization of pseudexin phospholipases A2 from Pseudechis porphyriacus (Australian red-bellied black snake).</title>
        <authorList>
            <person name="Schmidt J.J."/>
            <person name="Middlebrook J.L."/>
        </authorList>
    </citation>
    <scope>PROTEIN SEQUENCE</scope>
    <scope>CATALYTIC ACTIVITY</scope>
    <scope>TOXIC DOSE</scope>
    <source>
        <tissue>Venom</tissue>
    </source>
</reference>
<comment type="function">
    <text>PLA2 catalyzes the calcium-dependent hydrolysis of the 2-acyl groups in 3-sn-phosphoglycerides.</text>
</comment>
<comment type="catalytic activity">
    <reaction evidence="2 3 4">
        <text>a 1,2-diacyl-sn-glycero-3-phosphocholine + H2O = a 1-acyl-sn-glycero-3-phosphocholine + a fatty acid + H(+)</text>
        <dbReference type="Rhea" id="RHEA:15801"/>
        <dbReference type="ChEBI" id="CHEBI:15377"/>
        <dbReference type="ChEBI" id="CHEBI:15378"/>
        <dbReference type="ChEBI" id="CHEBI:28868"/>
        <dbReference type="ChEBI" id="CHEBI:57643"/>
        <dbReference type="ChEBI" id="CHEBI:58168"/>
        <dbReference type="EC" id="3.1.1.4"/>
    </reaction>
</comment>
<comment type="cofactor">
    <cofactor evidence="1">
        <name>Ca(2+)</name>
        <dbReference type="ChEBI" id="CHEBI:29108"/>
    </cofactor>
    <text evidence="1">Binds 1 Ca(2+) ion.</text>
</comment>
<comment type="subcellular location">
    <subcellularLocation>
        <location>Secreted</location>
    </subcellularLocation>
</comment>
<comment type="tissue specificity">
    <text>Expressed by the venom gland.</text>
</comment>
<comment type="toxic dose">
    <text evidence="4">LD(50) is 750 ug/kg intraperitoneal injection into mice.</text>
</comment>
<comment type="similarity">
    <text evidence="5">Belongs to the phospholipase A2 family. Group I subfamily. D49 sub-subfamily.</text>
</comment>
<organism>
    <name type="scientific">Pseudechis porphyriacus</name>
    <name type="common">Red-bellied black snake</name>
    <dbReference type="NCBI Taxonomy" id="8671"/>
    <lineage>
        <taxon>Eukaryota</taxon>
        <taxon>Metazoa</taxon>
        <taxon>Chordata</taxon>
        <taxon>Craniata</taxon>
        <taxon>Vertebrata</taxon>
        <taxon>Euteleostomi</taxon>
        <taxon>Lepidosauria</taxon>
        <taxon>Squamata</taxon>
        <taxon>Bifurcata</taxon>
        <taxon>Unidentata</taxon>
        <taxon>Episquamata</taxon>
        <taxon>Toxicofera</taxon>
        <taxon>Serpentes</taxon>
        <taxon>Colubroidea</taxon>
        <taxon>Elapidae</taxon>
        <taxon>Hydrophiinae</taxon>
        <taxon>Pseudechis</taxon>
    </lineage>
</organism>